<accession>B5ZWT5</accession>
<dbReference type="EC" id="2.7.1.2" evidence="1"/>
<dbReference type="EMBL" id="CP001191">
    <property type="protein sequence ID" value="ACI57391.1"/>
    <property type="molecule type" value="Genomic_DNA"/>
</dbReference>
<dbReference type="RefSeq" id="WP_012559531.1">
    <property type="nucleotide sequence ID" value="NC_011369.1"/>
</dbReference>
<dbReference type="SMR" id="B5ZWT5"/>
<dbReference type="STRING" id="395492.Rleg2_4129"/>
<dbReference type="KEGG" id="rlt:Rleg2_4129"/>
<dbReference type="eggNOG" id="COG0837">
    <property type="taxonomic scope" value="Bacteria"/>
</dbReference>
<dbReference type="HOGENOM" id="CLU_042582_1_0_5"/>
<dbReference type="Proteomes" id="UP000008330">
    <property type="component" value="Chromosome"/>
</dbReference>
<dbReference type="GO" id="GO:0005829">
    <property type="term" value="C:cytosol"/>
    <property type="evidence" value="ECO:0007669"/>
    <property type="project" value="TreeGrafter"/>
</dbReference>
<dbReference type="GO" id="GO:0005524">
    <property type="term" value="F:ATP binding"/>
    <property type="evidence" value="ECO:0007669"/>
    <property type="project" value="UniProtKB-UniRule"/>
</dbReference>
<dbReference type="GO" id="GO:0005536">
    <property type="term" value="F:D-glucose binding"/>
    <property type="evidence" value="ECO:0007669"/>
    <property type="project" value="InterPro"/>
</dbReference>
<dbReference type="GO" id="GO:0004340">
    <property type="term" value="F:glucokinase activity"/>
    <property type="evidence" value="ECO:0007669"/>
    <property type="project" value="UniProtKB-UniRule"/>
</dbReference>
<dbReference type="GO" id="GO:0006096">
    <property type="term" value="P:glycolytic process"/>
    <property type="evidence" value="ECO:0007669"/>
    <property type="project" value="UniProtKB-UniRule"/>
</dbReference>
<dbReference type="CDD" id="cd24008">
    <property type="entry name" value="ASKHA_NBD_GLK"/>
    <property type="match status" value="1"/>
</dbReference>
<dbReference type="Gene3D" id="3.30.420.40">
    <property type="match status" value="1"/>
</dbReference>
<dbReference type="Gene3D" id="3.40.367.20">
    <property type="match status" value="1"/>
</dbReference>
<dbReference type="HAMAP" id="MF_00524">
    <property type="entry name" value="Glucokinase"/>
    <property type="match status" value="1"/>
</dbReference>
<dbReference type="InterPro" id="IPR043129">
    <property type="entry name" value="ATPase_NBD"/>
</dbReference>
<dbReference type="InterPro" id="IPR050201">
    <property type="entry name" value="Bacterial_glucokinase"/>
</dbReference>
<dbReference type="InterPro" id="IPR003836">
    <property type="entry name" value="Glucokinase"/>
</dbReference>
<dbReference type="NCBIfam" id="TIGR00749">
    <property type="entry name" value="glk"/>
    <property type="match status" value="1"/>
</dbReference>
<dbReference type="NCBIfam" id="NF001417">
    <property type="entry name" value="PRK00292.1-4"/>
    <property type="match status" value="1"/>
</dbReference>
<dbReference type="PANTHER" id="PTHR47690">
    <property type="entry name" value="GLUCOKINASE"/>
    <property type="match status" value="1"/>
</dbReference>
<dbReference type="PANTHER" id="PTHR47690:SF1">
    <property type="entry name" value="GLUCOKINASE"/>
    <property type="match status" value="1"/>
</dbReference>
<dbReference type="Pfam" id="PF02685">
    <property type="entry name" value="Glucokinase"/>
    <property type="match status" value="1"/>
</dbReference>
<dbReference type="SUPFAM" id="SSF53067">
    <property type="entry name" value="Actin-like ATPase domain"/>
    <property type="match status" value="1"/>
</dbReference>
<reference key="1">
    <citation type="journal article" date="2010" name="Stand. Genomic Sci.">
        <title>Complete genome sequence of Rhizobium leguminosarum bv trifolii strain WSM2304, an effective microsymbiont of the South American clover Trifolium polymorphum.</title>
        <authorList>
            <person name="Reeve W."/>
            <person name="O'Hara G."/>
            <person name="Chain P."/>
            <person name="Ardley J."/>
            <person name="Brau L."/>
            <person name="Nandesena K."/>
            <person name="Tiwari R."/>
            <person name="Malfatti S."/>
            <person name="Kiss H."/>
            <person name="Lapidus A."/>
            <person name="Copeland A."/>
            <person name="Nolan M."/>
            <person name="Land M."/>
            <person name="Ivanova N."/>
            <person name="Mavromatis K."/>
            <person name="Markowitz V."/>
            <person name="Kyrpides N."/>
            <person name="Melino V."/>
            <person name="Denton M."/>
            <person name="Yates R."/>
            <person name="Howieson J."/>
        </authorList>
    </citation>
    <scope>NUCLEOTIDE SEQUENCE [LARGE SCALE GENOMIC DNA]</scope>
    <source>
        <strain>WSM2304</strain>
    </source>
</reference>
<sequence length="341" mass="36518">MPKPNHSTAPLPFPILIGDIGGTNARFSILTDAYAEPKQFPNVRTADFATIDEAIQQGVLDKTAVQPRSAILAVAGPINDDEIPLTNCDWVVRPKTMIEGLGMEDVLVVNDFEAQALAVAALSDENRERIGEATGDMIASRVVLGPGTGLGVGGLVHAQHSWIPVPGEGGHVDLGPRSKRDYQIFPHIETIEGRVSAEQILCGRGLVNLYHAICVVDGIQPTMKDPADITSHALAGSDKAAVETVSLFATYLGRVAGDMAMVFMARGGVYLSGGISQKILPALRRPEFRLAFEDKAPHTALLRTIPTYVVTHPLAALAGLSSYARMPANFGVSTEGRRWRR</sequence>
<keyword id="KW-0067">ATP-binding</keyword>
<keyword id="KW-0963">Cytoplasm</keyword>
<keyword id="KW-0324">Glycolysis</keyword>
<keyword id="KW-0418">Kinase</keyword>
<keyword id="KW-0547">Nucleotide-binding</keyword>
<keyword id="KW-1185">Reference proteome</keyword>
<keyword id="KW-0808">Transferase</keyword>
<comment type="catalytic activity">
    <reaction evidence="1">
        <text>D-glucose + ATP = D-glucose 6-phosphate + ADP + H(+)</text>
        <dbReference type="Rhea" id="RHEA:17825"/>
        <dbReference type="ChEBI" id="CHEBI:4167"/>
        <dbReference type="ChEBI" id="CHEBI:15378"/>
        <dbReference type="ChEBI" id="CHEBI:30616"/>
        <dbReference type="ChEBI" id="CHEBI:61548"/>
        <dbReference type="ChEBI" id="CHEBI:456216"/>
        <dbReference type="EC" id="2.7.1.2"/>
    </reaction>
</comment>
<comment type="subcellular location">
    <subcellularLocation>
        <location evidence="1">Cytoplasm</location>
    </subcellularLocation>
</comment>
<comment type="similarity">
    <text evidence="1">Belongs to the bacterial glucokinase family.</text>
</comment>
<proteinExistence type="inferred from homology"/>
<evidence type="ECO:0000255" key="1">
    <source>
        <dbReference type="HAMAP-Rule" id="MF_00524"/>
    </source>
</evidence>
<gene>
    <name evidence="1" type="primary">glk</name>
    <name type="ordered locus">Rleg2_4129</name>
</gene>
<protein>
    <recommendedName>
        <fullName evidence="1">Glucokinase</fullName>
        <ecNumber evidence="1">2.7.1.2</ecNumber>
    </recommendedName>
    <alternativeName>
        <fullName evidence="1">Glucose kinase</fullName>
    </alternativeName>
</protein>
<feature type="chain" id="PRO_1000127716" description="Glucokinase">
    <location>
        <begin position="1"/>
        <end position="341"/>
    </location>
</feature>
<feature type="binding site" evidence="1">
    <location>
        <begin position="18"/>
        <end position="23"/>
    </location>
    <ligand>
        <name>ATP</name>
        <dbReference type="ChEBI" id="CHEBI:30616"/>
    </ligand>
</feature>
<organism>
    <name type="scientific">Rhizobium leguminosarum bv. trifolii (strain WSM2304)</name>
    <dbReference type="NCBI Taxonomy" id="395492"/>
    <lineage>
        <taxon>Bacteria</taxon>
        <taxon>Pseudomonadati</taxon>
        <taxon>Pseudomonadota</taxon>
        <taxon>Alphaproteobacteria</taxon>
        <taxon>Hyphomicrobiales</taxon>
        <taxon>Rhizobiaceae</taxon>
        <taxon>Rhizobium/Agrobacterium group</taxon>
        <taxon>Rhizobium</taxon>
    </lineage>
</organism>
<name>GLK_RHILW</name>